<proteinExistence type="evidence at protein level"/>
<accession>Q8G848</accession>
<name>FRUE_BIFLO</name>
<protein>
    <recommendedName>
        <fullName evidence="4">Fructose import binding protein FruE</fullName>
    </recommendedName>
</protein>
<dbReference type="EMBL" id="AE014295">
    <property type="protein sequence ID" value="AAN23900.1"/>
    <property type="molecule type" value="Genomic_DNA"/>
</dbReference>
<dbReference type="RefSeq" id="NP_695264.1">
    <property type="nucleotide sequence ID" value="NC_004307.2"/>
</dbReference>
<dbReference type="RefSeq" id="WP_007053222.1">
    <property type="nucleotide sequence ID" value="NC_004307.2"/>
</dbReference>
<dbReference type="SMR" id="Q8G848"/>
<dbReference type="STRING" id="206672.BL0033"/>
<dbReference type="TCDB" id="3.A.1.2.23">
    <property type="family name" value="the atp-binding cassette (abc) superfamily"/>
</dbReference>
<dbReference type="EnsemblBacteria" id="AAN23900">
    <property type="protein sequence ID" value="AAN23900"/>
    <property type="gene ID" value="BL0033"/>
</dbReference>
<dbReference type="KEGG" id="blo:BL0033"/>
<dbReference type="PATRIC" id="fig|206672.9.peg.35"/>
<dbReference type="HOGENOM" id="CLU_037628_3_2_11"/>
<dbReference type="OrthoDB" id="9813037at2"/>
<dbReference type="PhylomeDB" id="Q8G848"/>
<dbReference type="Proteomes" id="UP000000439">
    <property type="component" value="Chromosome"/>
</dbReference>
<dbReference type="GO" id="GO:0005886">
    <property type="term" value="C:plasma membrane"/>
    <property type="evidence" value="ECO:0007669"/>
    <property type="project" value="UniProtKB-SubCell"/>
</dbReference>
<dbReference type="GO" id="GO:0030246">
    <property type="term" value="F:carbohydrate binding"/>
    <property type="evidence" value="ECO:0007669"/>
    <property type="project" value="UniProtKB-ARBA"/>
</dbReference>
<dbReference type="CDD" id="cd06309">
    <property type="entry name" value="PBP1_galactofuranose_YtfQ-like"/>
    <property type="match status" value="1"/>
</dbReference>
<dbReference type="Gene3D" id="3.40.50.2300">
    <property type="match status" value="2"/>
</dbReference>
<dbReference type="InterPro" id="IPR028082">
    <property type="entry name" value="Peripla_BP_I"/>
</dbReference>
<dbReference type="InterPro" id="IPR025997">
    <property type="entry name" value="SBP_2_dom"/>
</dbReference>
<dbReference type="PANTHER" id="PTHR46847">
    <property type="entry name" value="D-ALLOSE-BINDING PERIPLASMIC PROTEIN-RELATED"/>
    <property type="match status" value="1"/>
</dbReference>
<dbReference type="PANTHER" id="PTHR46847:SF3">
    <property type="entry name" value="GALACTOFURANOSE-BINDING PROTEIN YTFQ"/>
    <property type="match status" value="1"/>
</dbReference>
<dbReference type="Pfam" id="PF13407">
    <property type="entry name" value="Peripla_BP_4"/>
    <property type="match status" value="1"/>
</dbReference>
<dbReference type="SUPFAM" id="SSF53822">
    <property type="entry name" value="Periplasmic binding protein-like I"/>
    <property type="match status" value="1"/>
</dbReference>
<dbReference type="PROSITE" id="PS51257">
    <property type="entry name" value="PROKAR_LIPOPROTEIN"/>
    <property type="match status" value="1"/>
</dbReference>
<keyword id="KW-1003">Cell membrane</keyword>
<keyword id="KW-0449">Lipoprotein</keyword>
<keyword id="KW-0472">Membrane</keyword>
<keyword id="KW-0564">Palmitate</keyword>
<keyword id="KW-1185">Reference proteome</keyword>
<keyword id="KW-0732">Signal</keyword>
<keyword id="KW-0762">Sugar transport</keyword>
<keyword id="KW-0813">Transport</keyword>
<organism>
    <name type="scientific">Bifidobacterium longum (strain NCC 2705)</name>
    <dbReference type="NCBI Taxonomy" id="206672"/>
    <lineage>
        <taxon>Bacteria</taxon>
        <taxon>Bacillati</taxon>
        <taxon>Actinomycetota</taxon>
        <taxon>Actinomycetes</taxon>
        <taxon>Bifidobacteriales</taxon>
        <taxon>Bifidobacteriaceae</taxon>
        <taxon>Bifidobacterium</taxon>
    </lineage>
</organism>
<reference key="1">
    <citation type="journal article" date="2002" name="Proc. Natl. Acad. Sci. U.S.A.">
        <title>The genome sequence of Bifidobacterium longum reflects its adaptation to the human gastrointestinal tract.</title>
        <authorList>
            <person name="Schell M.A."/>
            <person name="Karmirantzou M."/>
            <person name="Snel B."/>
            <person name="Vilanova D."/>
            <person name="Berger B."/>
            <person name="Pessi G."/>
            <person name="Zwahlen M.-C."/>
            <person name="Desiere F."/>
            <person name="Bork P."/>
            <person name="Delley M."/>
            <person name="Pridmore R.D."/>
            <person name="Arigoni F."/>
        </authorList>
    </citation>
    <scope>NUCLEOTIDE SEQUENCE [LARGE SCALE GENOMIC DNA]</scope>
    <source>
        <strain>NCC 2705</strain>
    </source>
</reference>
<reference key="2">
    <citation type="journal article" date="2012" name="J. Biol. Chem.">
        <title>Fructose uptake in Bifidobacterium longum NCC2705 is mediated by an ATP-binding cassette transporter.</title>
        <authorList>
            <person name="Wei X."/>
            <person name="Guo Y."/>
            <person name="Shao C."/>
            <person name="Sun Z."/>
            <person name="Zhurina D."/>
            <person name="Liu D."/>
            <person name="Liu W."/>
            <person name="Zou D."/>
            <person name="Jiang Z."/>
            <person name="Wang X."/>
            <person name="Zhao J."/>
            <person name="Shang W."/>
            <person name="Li X."/>
            <person name="Liao X."/>
            <person name="Huang L."/>
            <person name="Riedel C.U."/>
            <person name="Yuan J."/>
        </authorList>
    </citation>
    <scope>FUNCTION</scope>
    <scope>IDENTIFICATION BY MASS SPECTROMETRY</scope>
    <scope>SUBUNIT</scope>
    <scope>INTERACTION WITH FRUF AND FRUG</scope>
    <scope>INDUCTION</scope>
    <scope>DISRUPTION PHENOTYPE</scope>
    <source>
        <strain>NCC 2705</strain>
    </source>
</reference>
<feature type="signal peptide" evidence="1">
    <location>
        <begin position="1"/>
        <end position="22"/>
    </location>
</feature>
<feature type="chain" id="PRO_5004307638" description="Fructose import binding protein FruE" evidence="1">
    <location>
        <begin position="23"/>
        <end position="327"/>
    </location>
</feature>
<feature type="lipid moiety-binding region" description="N-palmitoyl cysteine" evidence="1">
    <location>
        <position position="23"/>
    </location>
</feature>
<feature type="lipid moiety-binding region" description="S-diacylglycerol cysteine" evidence="1">
    <location>
        <position position="23"/>
    </location>
</feature>
<sequence length="327" mass="34690">MKNWKKAIALVASAAALVSVAACGSSNAGGSSDSGKKTVGFVAVGPEGGFRTANEKDIQKAFEDAGFDLTYSPTQNNDQQKQIQAFNKFVNDEVDAIILSSTEDSGWDDSLKKAAEAEIPVFTVDRNVDVKDAEAKKAIVAHIGPSNVWCGEQAAEFVNKNFPDGANGFILEGPAGLSVVKDRGTGWGNKVASNVKVLESQSANWSTDEAKTVTAGLLDKYKSDNPQFIFAQNDEMGLGAAQAVDAAGLKGKVKIITIDGTKNALQALVDGDLSYVIEYNPIFGKETAQAVKDYLDGKTVEKDIEIESKTFDAASAKEALDNNTRAY</sequence>
<comment type="function">
    <text evidence="2">Part of the high-affinity ABC transporter complex FruEKFG involved in fructose uptake. Can also transport ribose and xylose, with lower affinity. Binds fructose, ribose and xylose, with fructose as the preferred substrate.</text>
</comment>
<comment type="subunit">
    <text evidence="2">The complex is composed of an ATP-binding protein (FruK), two transmembrane proteins (FruF and FruG) and a solute-binding protein (FruE).</text>
</comment>
<comment type="subcellular location">
    <subcellularLocation>
        <location evidence="1">Cell membrane</location>
        <topology evidence="1">Lipid-anchor</topology>
    </subcellularLocation>
</comment>
<comment type="induction">
    <text evidence="2">Induced specifically and reversibly by fructose both in a time- and dose-dependent manner. Also induced by ribose or xylose, but not by glucose.</text>
</comment>
<comment type="disruption phenotype">
    <text evidence="2">Mutant is unable to grow on fructose as sole carbon source.</text>
</comment>
<comment type="similarity">
    <text evidence="4">Belongs to the bacterial solute-binding protein 2 family.</text>
</comment>
<evidence type="ECO:0000255" key="1">
    <source>
        <dbReference type="PROSITE-ProRule" id="PRU00303"/>
    </source>
</evidence>
<evidence type="ECO:0000269" key="2">
    <source>
    </source>
</evidence>
<evidence type="ECO:0000303" key="3">
    <source>
    </source>
</evidence>
<evidence type="ECO:0000305" key="4"/>
<evidence type="ECO:0000312" key="5">
    <source>
        <dbReference type="EMBL" id="AAN23900.1"/>
    </source>
</evidence>
<gene>
    <name evidence="3" type="primary">fruE</name>
    <name evidence="5" type="ordered locus">BL0033</name>
</gene>